<sequence length="108" mass="12200">MKKLLVIVYPDMNDVEYTNTMVVFGFVKELQTVIYHPNLSTVKGSNGVTLVNQITSKVNLEEFDGVFIPGGMGATKVLDHDQQLLDTIRYFKDHDKYVFAICDTPNVL</sequence>
<dbReference type="EMBL" id="U00089">
    <property type="protein sequence ID" value="AAB95770.1"/>
    <property type="molecule type" value="Genomic_DNA"/>
</dbReference>
<dbReference type="PIR" id="S73448">
    <property type="entry name" value="S73448"/>
</dbReference>
<dbReference type="RefSeq" id="NP_109720.1">
    <property type="nucleotide sequence ID" value="NC_000912.1"/>
</dbReference>
<dbReference type="RefSeq" id="WP_010874389.1">
    <property type="nucleotide sequence ID" value="NZ_OU342337.1"/>
</dbReference>
<dbReference type="SMR" id="P75082"/>
<dbReference type="IntAct" id="P75082">
    <property type="interactions" value="3"/>
</dbReference>
<dbReference type="STRING" id="272634.MPN_032"/>
<dbReference type="EnsemblBacteria" id="AAB95770">
    <property type="protein sequence ID" value="AAB95770"/>
    <property type="gene ID" value="MPN_032"/>
</dbReference>
<dbReference type="KEGG" id="mpn:MPN_032"/>
<dbReference type="PATRIC" id="fig|272634.6.peg.31"/>
<dbReference type="HOGENOM" id="CLU_2194044_0_0_14"/>
<dbReference type="OrthoDB" id="9800516at2"/>
<dbReference type="BioCyc" id="MPNE272634:G1GJ3-46-MONOMER"/>
<dbReference type="Proteomes" id="UP000000808">
    <property type="component" value="Chromosome"/>
</dbReference>
<dbReference type="GO" id="GO:0005737">
    <property type="term" value="C:cytoplasm"/>
    <property type="evidence" value="ECO:0007669"/>
    <property type="project" value="TreeGrafter"/>
</dbReference>
<dbReference type="Gene3D" id="3.40.50.880">
    <property type="match status" value="1"/>
</dbReference>
<dbReference type="InterPro" id="IPR029062">
    <property type="entry name" value="Class_I_gatase-like"/>
</dbReference>
<dbReference type="InterPro" id="IPR002818">
    <property type="entry name" value="DJ-1/PfpI"/>
</dbReference>
<dbReference type="InterPro" id="IPR050325">
    <property type="entry name" value="Prot/Nucl_acid_deglycase"/>
</dbReference>
<dbReference type="PANTHER" id="PTHR48094:SF12">
    <property type="entry name" value="PARKINSON DISEASE PROTEIN 7 HOMOLOG"/>
    <property type="match status" value="1"/>
</dbReference>
<dbReference type="PANTHER" id="PTHR48094">
    <property type="entry name" value="PROTEIN/NUCLEIC ACID DEGLYCASE DJ-1-RELATED"/>
    <property type="match status" value="1"/>
</dbReference>
<dbReference type="Pfam" id="PF01965">
    <property type="entry name" value="DJ-1_PfpI"/>
    <property type="match status" value="1"/>
</dbReference>
<dbReference type="SUPFAM" id="SSF52317">
    <property type="entry name" value="Class I glutamine amidotransferase-like"/>
    <property type="match status" value="1"/>
</dbReference>
<accession>P75082</accession>
<feature type="chain" id="PRO_0000210394" description="Uncharacterized protein MG029 homolog">
    <location>
        <begin position="1"/>
        <end position="108"/>
    </location>
</feature>
<organism>
    <name type="scientific">Mycoplasma pneumoniae (strain ATCC 29342 / M129 / Subtype 1)</name>
    <name type="common">Mycoplasmoides pneumoniae</name>
    <dbReference type="NCBI Taxonomy" id="272634"/>
    <lineage>
        <taxon>Bacteria</taxon>
        <taxon>Bacillati</taxon>
        <taxon>Mycoplasmatota</taxon>
        <taxon>Mycoplasmoidales</taxon>
        <taxon>Mycoplasmoidaceae</taxon>
        <taxon>Mycoplasmoides</taxon>
    </lineage>
</organism>
<proteinExistence type="predicted"/>
<reference key="1">
    <citation type="journal article" date="1996" name="Nucleic Acids Res.">
        <title>Complete sequence analysis of the genome of the bacterium Mycoplasma pneumoniae.</title>
        <authorList>
            <person name="Himmelreich R."/>
            <person name="Hilbert H."/>
            <person name="Plagens H."/>
            <person name="Pirkl E."/>
            <person name="Li B.-C."/>
            <person name="Herrmann R."/>
        </authorList>
    </citation>
    <scope>NUCLEOTIDE SEQUENCE [LARGE SCALE GENOMIC DNA]</scope>
    <source>
        <strain>ATCC 29342 / M129 / Subtype 1</strain>
    </source>
</reference>
<gene>
    <name type="ordered locus">MPN_032</name>
    <name type="ORF">B01_orf108</name>
    <name type="ORF">MP122</name>
</gene>
<protein>
    <recommendedName>
        <fullName>Uncharacterized protein MG029 homolog</fullName>
    </recommendedName>
</protein>
<name>Y032_MYCPN</name>
<keyword id="KW-1185">Reference proteome</keyword>